<keyword id="KW-0479">Metal-binding</keyword>
<keyword id="KW-0539">Nucleus</keyword>
<keyword id="KW-1185">Reference proteome</keyword>
<keyword id="KW-0677">Repeat</keyword>
<keyword id="KW-0804">Transcription</keyword>
<keyword id="KW-0805">Transcription regulation</keyword>
<keyword id="KW-0862">Zinc</keyword>
<keyword id="KW-0863">Zinc-finger</keyword>
<protein>
    <recommendedName>
        <fullName>Transcription initiation factor IIB-2</fullName>
    </recommendedName>
    <alternativeName>
        <fullName>General transcription factor TFIIB-2</fullName>
        <shortName>AtTFIIB2</shortName>
    </alternativeName>
</protein>
<proteinExistence type="evidence at transcript level"/>
<evidence type="ECO:0000250" key="1">
    <source>
        <dbReference type="UniProtKB" id="Q00403"/>
    </source>
</evidence>
<evidence type="ECO:0000250" key="2">
    <source>
        <dbReference type="UniProtKB" id="Q8W0W3"/>
    </source>
</evidence>
<evidence type="ECO:0000255" key="3">
    <source>
        <dbReference type="PROSITE-ProRule" id="PRU00469"/>
    </source>
</evidence>
<evidence type="ECO:0000305" key="4"/>
<name>TF2B2_ARATH</name>
<organism>
    <name type="scientific">Arabidopsis thaliana</name>
    <name type="common">Mouse-ear cress</name>
    <dbReference type="NCBI Taxonomy" id="3702"/>
    <lineage>
        <taxon>Eukaryota</taxon>
        <taxon>Viridiplantae</taxon>
        <taxon>Streptophyta</taxon>
        <taxon>Embryophyta</taxon>
        <taxon>Tracheophyta</taxon>
        <taxon>Spermatophyta</taxon>
        <taxon>Magnoliopsida</taxon>
        <taxon>eudicotyledons</taxon>
        <taxon>Gunneridae</taxon>
        <taxon>Pentapetalae</taxon>
        <taxon>rosids</taxon>
        <taxon>malvids</taxon>
        <taxon>Brassicales</taxon>
        <taxon>Brassicaceae</taxon>
        <taxon>Camelineae</taxon>
        <taxon>Arabidopsis</taxon>
    </lineage>
</organism>
<feature type="chain" id="PRO_0000119302" description="Transcription initiation factor IIB-2">
    <location>
        <begin position="1"/>
        <end position="312"/>
    </location>
</feature>
<feature type="repeat" description="1">
    <location>
        <begin position="115"/>
        <end position="192"/>
    </location>
</feature>
<feature type="repeat" description="2">
    <location>
        <begin position="216"/>
        <end position="290"/>
    </location>
</feature>
<feature type="zinc finger region" description="TFIIB-type" evidence="3">
    <location>
        <begin position="2"/>
        <end position="34"/>
    </location>
</feature>
<feature type="binding site" evidence="3">
    <location>
        <position position="6"/>
    </location>
    <ligand>
        <name>Zn(2+)</name>
        <dbReference type="ChEBI" id="CHEBI:29105"/>
    </ligand>
</feature>
<feature type="binding site" evidence="3">
    <location>
        <position position="9"/>
    </location>
    <ligand>
        <name>Zn(2+)</name>
        <dbReference type="ChEBI" id="CHEBI:29105"/>
    </ligand>
</feature>
<feature type="binding site" evidence="3">
    <location>
        <position position="26"/>
    </location>
    <ligand>
        <name>Zn(2+)</name>
        <dbReference type="ChEBI" id="CHEBI:29105"/>
    </ligand>
</feature>
<feature type="binding site" evidence="3">
    <location>
        <position position="29"/>
    </location>
    <ligand>
        <name>Zn(2+)</name>
        <dbReference type="ChEBI" id="CHEBI:29105"/>
    </ligand>
</feature>
<sequence>MSDAFCSDCKRHTEVVFDHSAGDTVCSECGLVLESHSIDETSEWRTFANESGDNDPVRVGGPTNPLLADGGLTTVISKPNGSSGDFLSSSLGRWQNRGSNPDRGLIVAFKTIATMADRLGLVATIKDRANEIYKRVEDQKSSRGRNQDALLAACLYIACRQEDKPRTVKEICSVANGATKKEIGRAKEYIVKQLGLETGQLVEMGTIHAGDFMRRFCSNLGMTNQTVKAAQESVQKSEEFDIRRSPISIAAAVIYIITQLSDEKKPLRDISVATGVAEGTIRNSYKDLYPHLSKIIPAWYAKEEDLKNLQSP</sequence>
<comment type="function">
    <text evidence="2">General factor that plays a major role in the activation of eukaryotic genes transcribed by RNA polymerase II.</text>
</comment>
<comment type="subunit">
    <text evidence="1">Associates with TFIID-IIA (DA complex) to form TFIID-IIA-IIB (DAB-complex) which is then recognized by polymerase II.</text>
</comment>
<comment type="subcellular location">
    <subcellularLocation>
        <location>Nucleus</location>
    </subcellularLocation>
</comment>
<comment type="similarity">
    <text evidence="4">Belongs to the TFIIB family.</text>
</comment>
<dbReference type="EMBL" id="AY463601">
    <property type="protein sequence ID" value="AAR28003.1"/>
    <property type="molecule type" value="mRNA"/>
</dbReference>
<dbReference type="EMBL" id="AC009400">
    <property type="protein sequence ID" value="AAF02810.1"/>
    <property type="molecule type" value="Genomic_DNA"/>
</dbReference>
<dbReference type="EMBL" id="CP002686">
    <property type="protein sequence ID" value="AEE74892.1"/>
    <property type="molecule type" value="Genomic_DNA"/>
</dbReference>
<dbReference type="EMBL" id="AY050421">
    <property type="protein sequence ID" value="AAK91437.1"/>
    <property type="molecule type" value="mRNA"/>
</dbReference>
<dbReference type="EMBL" id="AY060526">
    <property type="protein sequence ID" value="AAL31139.1"/>
    <property type="molecule type" value="mRNA"/>
</dbReference>
<dbReference type="EMBL" id="AY087850">
    <property type="protein sequence ID" value="AAM65403.1"/>
    <property type="molecule type" value="mRNA"/>
</dbReference>
<dbReference type="EMBL" id="Z34661">
    <property type="protein sequence ID" value="CAA84309.1"/>
    <property type="molecule type" value="mRNA"/>
</dbReference>
<dbReference type="RefSeq" id="NP_187644.1">
    <property type="nucleotide sequence ID" value="NM_111868.3"/>
</dbReference>
<dbReference type="SMR" id="Q9SS44"/>
<dbReference type="BioGRID" id="5529">
    <property type="interactions" value="1"/>
</dbReference>
<dbReference type="FunCoup" id="Q9SS44">
    <property type="interactions" value="4001"/>
</dbReference>
<dbReference type="STRING" id="3702.Q9SS44"/>
<dbReference type="PaxDb" id="3702-AT3G10330.1"/>
<dbReference type="ProteomicsDB" id="234171"/>
<dbReference type="EnsemblPlants" id="AT3G10330.1">
    <property type="protein sequence ID" value="AT3G10330.1"/>
    <property type="gene ID" value="AT3G10330"/>
</dbReference>
<dbReference type="GeneID" id="820195"/>
<dbReference type="Gramene" id="AT3G10330.1">
    <property type="protein sequence ID" value="AT3G10330.1"/>
    <property type="gene ID" value="AT3G10330"/>
</dbReference>
<dbReference type="KEGG" id="ath:AT3G10330"/>
<dbReference type="Araport" id="AT3G10330"/>
<dbReference type="TAIR" id="AT3G10330">
    <property type="gene designation" value="TFIIB2"/>
</dbReference>
<dbReference type="eggNOG" id="KOG1597">
    <property type="taxonomic scope" value="Eukaryota"/>
</dbReference>
<dbReference type="HOGENOM" id="CLU_043736_1_1_1"/>
<dbReference type="InParanoid" id="Q9SS44"/>
<dbReference type="OMA" id="DHDQRMK"/>
<dbReference type="OrthoDB" id="25790at2759"/>
<dbReference type="PhylomeDB" id="Q9SS44"/>
<dbReference type="PRO" id="PR:Q9SS44"/>
<dbReference type="Proteomes" id="UP000006548">
    <property type="component" value="Chromosome 3"/>
</dbReference>
<dbReference type="ExpressionAtlas" id="Q9SS44">
    <property type="expression patterns" value="baseline and differential"/>
</dbReference>
<dbReference type="GO" id="GO:0005737">
    <property type="term" value="C:cytoplasm"/>
    <property type="evidence" value="ECO:0007005"/>
    <property type="project" value="TAIR"/>
</dbReference>
<dbReference type="GO" id="GO:0005634">
    <property type="term" value="C:nucleus"/>
    <property type="evidence" value="ECO:0007005"/>
    <property type="project" value="TAIR"/>
</dbReference>
<dbReference type="GO" id="GO:0017025">
    <property type="term" value="F:TBP-class protein binding"/>
    <property type="evidence" value="ECO:0007669"/>
    <property type="project" value="InterPro"/>
</dbReference>
<dbReference type="GO" id="GO:0008270">
    <property type="term" value="F:zinc ion binding"/>
    <property type="evidence" value="ECO:0007669"/>
    <property type="project" value="UniProtKB-KW"/>
</dbReference>
<dbReference type="GO" id="GO:0070897">
    <property type="term" value="P:transcription preinitiation complex assembly"/>
    <property type="evidence" value="ECO:0007669"/>
    <property type="project" value="InterPro"/>
</dbReference>
<dbReference type="CDD" id="cd20551">
    <property type="entry name" value="CYCLIN_TFIIB_rpt1"/>
    <property type="match status" value="1"/>
</dbReference>
<dbReference type="FunFam" id="1.10.472.10:FF:000043">
    <property type="entry name" value="Transcription initiation factor IIB"/>
    <property type="match status" value="1"/>
</dbReference>
<dbReference type="FunFam" id="1.10.472.170:FF:000002">
    <property type="entry name" value="Transcription initiation factor IIB"/>
    <property type="match status" value="1"/>
</dbReference>
<dbReference type="FunFam" id="1.10.472.10:FF:000019">
    <property type="entry name" value="transcription initiation factor IIB"/>
    <property type="match status" value="1"/>
</dbReference>
<dbReference type="Gene3D" id="1.10.472.170">
    <property type="match status" value="1"/>
</dbReference>
<dbReference type="Gene3D" id="1.10.472.10">
    <property type="entry name" value="Cyclin-like"/>
    <property type="match status" value="1"/>
</dbReference>
<dbReference type="InterPro" id="IPR013763">
    <property type="entry name" value="Cyclin-like_dom"/>
</dbReference>
<dbReference type="InterPro" id="IPR036915">
    <property type="entry name" value="Cyclin-like_sf"/>
</dbReference>
<dbReference type="InterPro" id="IPR000812">
    <property type="entry name" value="TFIIB"/>
</dbReference>
<dbReference type="InterPro" id="IPR023486">
    <property type="entry name" value="TFIIB_CS"/>
</dbReference>
<dbReference type="InterPro" id="IPR013150">
    <property type="entry name" value="TFIIB_cyclin"/>
</dbReference>
<dbReference type="InterPro" id="IPR013137">
    <property type="entry name" value="Znf_TFIIB"/>
</dbReference>
<dbReference type="PANTHER" id="PTHR11618:SF78">
    <property type="entry name" value="TRANSCRIPTION INITIATION FACTOR IIB-2"/>
    <property type="match status" value="1"/>
</dbReference>
<dbReference type="PANTHER" id="PTHR11618">
    <property type="entry name" value="TRANSCRIPTION INITIATION FACTOR IIB-RELATED"/>
    <property type="match status" value="1"/>
</dbReference>
<dbReference type="Pfam" id="PF00382">
    <property type="entry name" value="TFIIB"/>
    <property type="match status" value="2"/>
</dbReference>
<dbReference type="Pfam" id="PF08271">
    <property type="entry name" value="Zn_Ribbon_TF"/>
    <property type="match status" value="1"/>
</dbReference>
<dbReference type="PRINTS" id="PR00685">
    <property type="entry name" value="TIFACTORIIB"/>
</dbReference>
<dbReference type="SMART" id="SM00385">
    <property type="entry name" value="CYCLIN"/>
    <property type="match status" value="2"/>
</dbReference>
<dbReference type="SUPFAM" id="SSF47954">
    <property type="entry name" value="Cyclin-like"/>
    <property type="match status" value="2"/>
</dbReference>
<dbReference type="SUPFAM" id="SSF57783">
    <property type="entry name" value="Zinc beta-ribbon"/>
    <property type="match status" value="1"/>
</dbReference>
<dbReference type="PROSITE" id="PS00782">
    <property type="entry name" value="TFIIB"/>
    <property type="match status" value="1"/>
</dbReference>
<dbReference type="PROSITE" id="PS51134">
    <property type="entry name" value="ZF_TFIIB"/>
    <property type="match status" value="1"/>
</dbReference>
<accession>Q9SS44</accession>
<accession>P92972</accession>
<accession>Q53YT9</accession>
<gene>
    <name type="primary">TFIIB2</name>
    <name type="ordered locus">At3g10330</name>
    <name type="ORF">F14P13.7</name>
</gene>
<reference key="1">
    <citation type="submission" date="2003-11" db="EMBL/GenBank/DDBJ databases">
        <title>Binary protein-protein interactions of Arabidopsis thaliana general transcription factors TFIIa, TFIIb, TFIId, TFIIe, and TFIIf.</title>
        <authorList>
            <person name="Lawit S.J."/>
            <person name="Gurley W.B."/>
        </authorList>
    </citation>
    <scope>NUCLEOTIDE SEQUENCE [MRNA]</scope>
    <source>
        <strain>cv. Columbia</strain>
    </source>
</reference>
<reference key="2">
    <citation type="journal article" date="2000" name="Nature">
        <title>Sequence and analysis of chromosome 3 of the plant Arabidopsis thaliana.</title>
        <authorList>
            <person name="Salanoubat M."/>
            <person name="Lemcke K."/>
            <person name="Rieger M."/>
            <person name="Ansorge W."/>
            <person name="Unseld M."/>
            <person name="Fartmann B."/>
            <person name="Valle G."/>
            <person name="Bloecker H."/>
            <person name="Perez-Alonso M."/>
            <person name="Obermaier B."/>
            <person name="Delseny M."/>
            <person name="Boutry M."/>
            <person name="Grivell L.A."/>
            <person name="Mache R."/>
            <person name="Puigdomenech P."/>
            <person name="De Simone V."/>
            <person name="Choisne N."/>
            <person name="Artiguenave F."/>
            <person name="Robert C."/>
            <person name="Brottier P."/>
            <person name="Wincker P."/>
            <person name="Cattolico L."/>
            <person name="Weissenbach J."/>
            <person name="Saurin W."/>
            <person name="Quetier F."/>
            <person name="Schaefer M."/>
            <person name="Mueller-Auer S."/>
            <person name="Gabel C."/>
            <person name="Fuchs M."/>
            <person name="Benes V."/>
            <person name="Wurmbach E."/>
            <person name="Drzonek H."/>
            <person name="Erfle H."/>
            <person name="Jordan N."/>
            <person name="Bangert S."/>
            <person name="Wiedelmann R."/>
            <person name="Kranz H."/>
            <person name="Voss H."/>
            <person name="Holland R."/>
            <person name="Brandt P."/>
            <person name="Nyakatura G."/>
            <person name="Vezzi A."/>
            <person name="D'Angelo M."/>
            <person name="Pallavicini A."/>
            <person name="Toppo S."/>
            <person name="Simionati B."/>
            <person name="Conrad A."/>
            <person name="Hornischer K."/>
            <person name="Kauer G."/>
            <person name="Loehnert T.-H."/>
            <person name="Nordsiek G."/>
            <person name="Reichelt J."/>
            <person name="Scharfe M."/>
            <person name="Schoen O."/>
            <person name="Bargues M."/>
            <person name="Terol J."/>
            <person name="Climent J."/>
            <person name="Navarro P."/>
            <person name="Collado C."/>
            <person name="Perez-Perez A."/>
            <person name="Ottenwaelder B."/>
            <person name="Duchemin D."/>
            <person name="Cooke R."/>
            <person name="Laudie M."/>
            <person name="Berger-Llauro C."/>
            <person name="Purnelle B."/>
            <person name="Masuy D."/>
            <person name="de Haan M."/>
            <person name="Maarse A.C."/>
            <person name="Alcaraz J.-P."/>
            <person name="Cottet A."/>
            <person name="Casacuberta E."/>
            <person name="Monfort A."/>
            <person name="Argiriou A."/>
            <person name="Flores M."/>
            <person name="Liguori R."/>
            <person name="Vitale D."/>
            <person name="Mannhaupt G."/>
            <person name="Haase D."/>
            <person name="Schoof H."/>
            <person name="Rudd S."/>
            <person name="Zaccaria P."/>
            <person name="Mewes H.-W."/>
            <person name="Mayer K.F.X."/>
            <person name="Kaul S."/>
            <person name="Town C.D."/>
            <person name="Koo H.L."/>
            <person name="Tallon L.J."/>
            <person name="Jenkins J."/>
            <person name="Rooney T."/>
            <person name="Rizzo M."/>
            <person name="Walts A."/>
            <person name="Utterback T."/>
            <person name="Fujii C.Y."/>
            <person name="Shea T.P."/>
            <person name="Creasy T.H."/>
            <person name="Haas B."/>
            <person name="Maiti R."/>
            <person name="Wu D."/>
            <person name="Peterson J."/>
            <person name="Van Aken S."/>
            <person name="Pai G."/>
            <person name="Militscher J."/>
            <person name="Sellers P."/>
            <person name="Gill J.E."/>
            <person name="Feldblyum T.V."/>
            <person name="Preuss D."/>
            <person name="Lin X."/>
            <person name="Nierman W.C."/>
            <person name="Salzberg S.L."/>
            <person name="White O."/>
            <person name="Venter J.C."/>
            <person name="Fraser C.M."/>
            <person name="Kaneko T."/>
            <person name="Nakamura Y."/>
            <person name="Sato S."/>
            <person name="Kato T."/>
            <person name="Asamizu E."/>
            <person name="Sasamoto S."/>
            <person name="Kimura T."/>
            <person name="Idesawa K."/>
            <person name="Kawashima K."/>
            <person name="Kishida Y."/>
            <person name="Kiyokawa C."/>
            <person name="Kohara M."/>
            <person name="Matsumoto M."/>
            <person name="Matsuno A."/>
            <person name="Muraki A."/>
            <person name="Nakayama S."/>
            <person name="Nakazaki N."/>
            <person name="Shinpo S."/>
            <person name="Takeuchi C."/>
            <person name="Wada T."/>
            <person name="Watanabe A."/>
            <person name="Yamada M."/>
            <person name="Yasuda M."/>
            <person name="Tabata S."/>
        </authorList>
    </citation>
    <scope>NUCLEOTIDE SEQUENCE [LARGE SCALE GENOMIC DNA]</scope>
    <source>
        <strain>cv. Columbia</strain>
    </source>
</reference>
<reference key="3">
    <citation type="journal article" date="2017" name="Plant J.">
        <title>Araport11: a complete reannotation of the Arabidopsis thaliana reference genome.</title>
        <authorList>
            <person name="Cheng C.Y."/>
            <person name="Krishnakumar V."/>
            <person name="Chan A.P."/>
            <person name="Thibaud-Nissen F."/>
            <person name="Schobel S."/>
            <person name="Town C.D."/>
        </authorList>
    </citation>
    <scope>GENOME REANNOTATION</scope>
    <source>
        <strain>cv. Columbia</strain>
    </source>
</reference>
<reference key="4">
    <citation type="journal article" date="2003" name="Science">
        <title>Empirical analysis of transcriptional activity in the Arabidopsis genome.</title>
        <authorList>
            <person name="Yamada K."/>
            <person name="Lim J."/>
            <person name="Dale J.M."/>
            <person name="Chen H."/>
            <person name="Shinn P."/>
            <person name="Palm C.J."/>
            <person name="Southwick A.M."/>
            <person name="Wu H.C."/>
            <person name="Kim C.J."/>
            <person name="Nguyen M."/>
            <person name="Pham P.K."/>
            <person name="Cheuk R.F."/>
            <person name="Karlin-Newmann G."/>
            <person name="Liu S.X."/>
            <person name="Lam B."/>
            <person name="Sakano H."/>
            <person name="Wu T."/>
            <person name="Yu G."/>
            <person name="Miranda M."/>
            <person name="Quach H.L."/>
            <person name="Tripp M."/>
            <person name="Chang C.H."/>
            <person name="Lee J.M."/>
            <person name="Toriumi M.J."/>
            <person name="Chan M.M."/>
            <person name="Tang C.C."/>
            <person name="Onodera C.S."/>
            <person name="Deng J.M."/>
            <person name="Akiyama K."/>
            <person name="Ansari Y."/>
            <person name="Arakawa T."/>
            <person name="Banh J."/>
            <person name="Banno F."/>
            <person name="Bowser L."/>
            <person name="Brooks S.Y."/>
            <person name="Carninci P."/>
            <person name="Chao Q."/>
            <person name="Choy N."/>
            <person name="Enju A."/>
            <person name="Goldsmith A.D."/>
            <person name="Gurjal M."/>
            <person name="Hansen N.F."/>
            <person name="Hayashizaki Y."/>
            <person name="Johnson-Hopson C."/>
            <person name="Hsuan V.W."/>
            <person name="Iida K."/>
            <person name="Karnes M."/>
            <person name="Khan S."/>
            <person name="Koesema E."/>
            <person name="Ishida J."/>
            <person name="Jiang P.X."/>
            <person name="Jones T."/>
            <person name="Kawai J."/>
            <person name="Kamiya A."/>
            <person name="Meyers C."/>
            <person name="Nakajima M."/>
            <person name="Narusaka M."/>
            <person name="Seki M."/>
            <person name="Sakurai T."/>
            <person name="Satou M."/>
            <person name="Tamse R."/>
            <person name="Vaysberg M."/>
            <person name="Wallender E.K."/>
            <person name="Wong C."/>
            <person name="Yamamura Y."/>
            <person name="Yuan S."/>
            <person name="Shinozaki K."/>
            <person name="Davis R.W."/>
            <person name="Theologis A."/>
            <person name="Ecker J.R."/>
        </authorList>
    </citation>
    <scope>NUCLEOTIDE SEQUENCE [LARGE SCALE MRNA]</scope>
    <source>
        <strain>cv. Columbia</strain>
    </source>
</reference>
<reference key="5">
    <citation type="submission" date="2002-03" db="EMBL/GenBank/DDBJ databases">
        <title>Full-length cDNA from Arabidopsis thaliana.</title>
        <authorList>
            <person name="Brover V.V."/>
            <person name="Troukhan M.E."/>
            <person name="Alexandrov N.A."/>
            <person name="Lu Y.-P."/>
            <person name="Flavell R.B."/>
            <person name="Feldmann K.A."/>
        </authorList>
    </citation>
    <scope>NUCLEOTIDE SEQUENCE [LARGE SCALE MRNA]</scope>
</reference>
<reference key="6">
    <citation type="journal article" date="1996" name="Plant J.">
        <title>Further progress towards a catalogue of all Arabidopsis genes: analysis of a set of 5000 non-redundant ESTs.</title>
        <authorList>
            <person name="Cooke R."/>
            <person name="Raynal M."/>
            <person name="Laudie M."/>
            <person name="Grellet F."/>
            <person name="Delseny M."/>
            <person name="Morris P.-C."/>
            <person name="Guerrier D."/>
            <person name="Giraudat J."/>
            <person name="Quigley F."/>
            <person name="Clabault G."/>
            <person name="Li Y.-F."/>
            <person name="Mache R."/>
            <person name="Krivitzky M."/>
            <person name="Gy I.J.-J."/>
            <person name="Kreis M."/>
            <person name="Lecharny A."/>
            <person name="Parmentier Y."/>
            <person name="Marbach J."/>
            <person name="Fleck J."/>
            <person name="Clement B."/>
            <person name="Philipps G."/>
            <person name="Herve C."/>
            <person name="Bardet C."/>
            <person name="Tremousaygue D."/>
            <person name="Lescure B."/>
            <person name="Lacomme C."/>
            <person name="Roby D."/>
            <person name="Jourjon M.-F."/>
            <person name="Chabrier P."/>
            <person name="Charpenteau J.-L."/>
            <person name="Desprez T."/>
            <person name="Amselem J."/>
            <person name="Chiapello H."/>
            <person name="Hoefte H."/>
        </authorList>
    </citation>
    <scope>NUCLEOTIDE SEQUENCE [LARGE SCALE MRNA] OF 12-312</scope>
    <source>
        <strain>cv. Columbia</strain>
        <tissue>Seedling</tissue>
    </source>
</reference>